<proteinExistence type="evidence at protein level"/>
<evidence type="ECO:0000255" key="1"/>
<evidence type="ECO:0000256" key="2">
    <source>
        <dbReference type="SAM" id="MobiDB-lite"/>
    </source>
</evidence>
<evidence type="ECO:0000269" key="3">
    <source>
    </source>
</evidence>
<evidence type="ECO:0000269" key="4">
    <source>
    </source>
</evidence>
<protein>
    <recommendedName>
        <fullName>Protein HPH2</fullName>
    </recommendedName>
    <alternativeName>
        <fullName>Functionally related to TCP1 protein 2</fullName>
    </alternativeName>
    <alternativeName>
        <fullName>High pH protein 2</fullName>
    </alternativeName>
</protein>
<keyword id="KW-0256">Endoplasmic reticulum</keyword>
<keyword id="KW-0472">Membrane</keyword>
<keyword id="KW-0597">Phosphoprotein</keyword>
<keyword id="KW-1185">Reference proteome</keyword>
<keyword id="KW-0812">Transmembrane</keyword>
<keyword id="KW-1133">Transmembrane helix</keyword>
<reference key="1">
    <citation type="journal article" date="1995" name="Proc. Natl. Acad. Sci. U.S.A.">
        <title>The nucleotide sequence of chromosome I from Saccharomyces cerevisiae.</title>
        <authorList>
            <person name="Bussey H."/>
            <person name="Kaback D.B."/>
            <person name="Zhong W.-W."/>
            <person name="Vo D.H."/>
            <person name="Clark M.W."/>
            <person name="Fortin N."/>
            <person name="Hall J."/>
            <person name="Ouellette B.F.F."/>
            <person name="Keng T."/>
            <person name="Barton A.B."/>
            <person name="Su Y."/>
            <person name="Davies C.J."/>
            <person name="Storms R.K."/>
        </authorList>
    </citation>
    <scope>NUCLEOTIDE SEQUENCE [LARGE SCALE GENOMIC DNA]</scope>
    <source>
        <strain>ATCC 204508 / S288c</strain>
    </source>
</reference>
<reference key="2">
    <citation type="submission" date="1996-04" db="EMBL/GenBank/DDBJ databases">
        <authorList>
            <person name="Vo D.T."/>
        </authorList>
    </citation>
    <scope>SEQUENCE REVISION</scope>
</reference>
<reference key="3">
    <citation type="journal article" date="2014" name="G3 (Bethesda)">
        <title>The reference genome sequence of Saccharomyces cerevisiae: Then and now.</title>
        <authorList>
            <person name="Engel S.R."/>
            <person name="Dietrich F.S."/>
            <person name="Fisk D.G."/>
            <person name="Binkley G."/>
            <person name="Balakrishnan R."/>
            <person name="Costanzo M.C."/>
            <person name="Dwight S.S."/>
            <person name="Hitz B.C."/>
            <person name="Karra K."/>
            <person name="Nash R.S."/>
            <person name="Weng S."/>
            <person name="Wong E.D."/>
            <person name="Lloyd P."/>
            <person name="Skrzypek M.S."/>
            <person name="Miyasato S.R."/>
            <person name="Simison M."/>
            <person name="Cherry J.M."/>
        </authorList>
    </citation>
    <scope>GENOME REANNOTATION</scope>
    <source>
        <strain>ATCC 204508 / S288c</strain>
    </source>
</reference>
<reference key="4">
    <citation type="journal article" date="2003" name="Nature">
        <title>Targets of the cyclin-dependent kinase Cdk1.</title>
        <authorList>
            <person name="Ubersax J.A."/>
            <person name="Woodbury E.L."/>
            <person name="Quang P.N."/>
            <person name="Paraz M."/>
            <person name="Blethrow J.D."/>
            <person name="Shah K."/>
            <person name="Shokat K.M."/>
            <person name="Morgan D.O."/>
        </authorList>
    </citation>
    <scope>PHOSPHORYLATION BY CDC28</scope>
</reference>
<reference key="5">
    <citation type="journal article" date="2004" name="Eukaryot. Cell">
        <title>Hph1p and Hph2p, novel components of calcineurin-mediated stress responses in Saccharomyces cerevisiae.</title>
        <authorList>
            <person name="Heath V.L."/>
            <person name="Shaw S.L."/>
            <person name="Roy S."/>
            <person name="Cyert M.S."/>
        </authorList>
    </citation>
    <scope>FUNCTION</scope>
    <scope>INTERACTION WITH HPH1</scope>
    <scope>SUBCELLULAR LOCATION</scope>
</reference>
<dbReference type="EMBL" id="U12980">
    <property type="protein sequence ID" value="AAC05004.1"/>
    <property type="molecule type" value="Genomic_DNA"/>
</dbReference>
<dbReference type="EMBL" id="BK006935">
    <property type="protein sequence ID" value="DAA06960.1"/>
    <property type="molecule type" value="Genomic_DNA"/>
</dbReference>
<dbReference type="PIR" id="S70295">
    <property type="entry name" value="S70295"/>
</dbReference>
<dbReference type="RefSeq" id="NP_009374.1">
    <property type="nucleotide sequence ID" value="NM_001178173.1"/>
</dbReference>
<dbReference type="SMR" id="P39734"/>
<dbReference type="BioGRID" id="31738">
    <property type="interactions" value="93"/>
</dbReference>
<dbReference type="DIP" id="DIP-1309N"/>
<dbReference type="FunCoup" id="P39734">
    <property type="interactions" value="107"/>
</dbReference>
<dbReference type="IntAct" id="P39734">
    <property type="interactions" value="5"/>
</dbReference>
<dbReference type="MINT" id="P39734"/>
<dbReference type="STRING" id="4932.YAL028W"/>
<dbReference type="iPTMnet" id="P39734"/>
<dbReference type="PaxDb" id="4932-YAL028W"/>
<dbReference type="PeptideAtlas" id="P39734"/>
<dbReference type="EnsemblFungi" id="YAL028W_mRNA">
    <property type="protein sequence ID" value="YAL028W"/>
    <property type="gene ID" value="YAL028W"/>
</dbReference>
<dbReference type="GeneID" id="851205"/>
<dbReference type="KEGG" id="sce:YAL028W"/>
<dbReference type="AGR" id="SGD:S000000026"/>
<dbReference type="SGD" id="S000000026">
    <property type="gene designation" value="FRT2"/>
</dbReference>
<dbReference type="VEuPathDB" id="FungiDB:YAL028W"/>
<dbReference type="eggNOG" id="ENOG502RZP4">
    <property type="taxonomic scope" value="Eukaryota"/>
</dbReference>
<dbReference type="GeneTree" id="ENSGT00940000176734"/>
<dbReference type="HOGENOM" id="CLU_035740_0_0_1"/>
<dbReference type="InParanoid" id="P39734"/>
<dbReference type="OMA" id="KYEMEHH"/>
<dbReference type="OrthoDB" id="4068598at2759"/>
<dbReference type="BioCyc" id="YEAST:G3O-28839-MONOMER"/>
<dbReference type="BioGRID-ORCS" id="851205">
    <property type="hits" value="7 hits in 10 CRISPR screens"/>
</dbReference>
<dbReference type="PRO" id="PR:P39734"/>
<dbReference type="Proteomes" id="UP000002311">
    <property type="component" value="Chromosome I"/>
</dbReference>
<dbReference type="RNAct" id="P39734">
    <property type="molecule type" value="protein"/>
</dbReference>
<dbReference type="GO" id="GO:0005783">
    <property type="term" value="C:endoplasmic reticulum"/>
    <property type="evidence" value="ECO:0000314"/>
    <property type="project" value="SGD"/>
</dbReference>
<dbReference type="GO" id="GO:0005789">
    <property type="term" value="C:endoplasmic reticulum membrane"/>
    <property type="evidence" value="ECO:0007669"/>
    <property type="project" value="UniProtKB-SubCell"/>
</dbReference>
<dbReference type="GO" id="GO:0071469">
    <property type="term" value="P:cellular response to alkaline pH"/>
    <property type="evidence" value="ECO:0000315"/>
    <property type="project" value="SGD"/>
</dbReference>
<dbReference type="GO" id="GO:0071472">
    <property type="term" value="P:cellular response to salt stress"/>
    <property type="evidence" value="ECO:0000315"/>
    <property type="project" value="SGD"/>
</dbReference>
<dbReference type="GO" id="GO:0031204">
    <property type="term" value="P:post-translational protein targeting to membrane, translocation"/>
    <property type="evidence" value="ECO:0000353"/>
    <property type="project" value="SGD"/>
</dbReference>
<dbReference type="InterPro" id="IPR025752">
    <property type="entry name" value="HPH_family"/>
</dbReference>
<dbReference type="Pfam" id="PF13694">
    <property type="entry name" value="Hph"/>
    <property type="match status" value="1"/>
</dbReference>
<feature type="chain" id="PRO_0000202415" description="Protein HPH2">
    <location>
        <begin position="1"/>
        <end position="528"/>
    </location>
</feature>
<feature type="transmembrane region" description="Helical" evidence="1">
    <location>
        <begin position="505"/>
        <end position="521"/>
    </location>
</feature>
<feature type="region of interest" description="Disordered" evidence="2">
    <location>
        <begin position="1"/>
        <end position="52"/>
    </location>
</feature>
<feature type="region of interest" description="Disordered" evidence="2">
    <location>
        <begin position="170"/>
        <end position="193"/>
    </location>
</feature>
<feature type="region of interest" description="Disordered" evidence="2">
    <location>
        <begin position="230"/>
        <end position="257"/>
    </location>
</feature>
<feature type="region of interest" description="Disordered" evidence="2">
    <location>
        <begin position="270"/>
        <end position="334"/>
    </location>
</feature>
<feature type="compositionally biased region" description="Low complexity" evidence="2">
    <location>
        <begin position="1"/>
        <end position="13"/>
    </location>
</feature>
<feature type="compositionally biased region" description="Basic and acidic residues" evidence="2">
    <location>
        <begin position="17"/>
        <end position="36"/>
    </location>
</feature>
<feature type="compositionally biased region" description="Low complexity" evidence="2">
    <location>
        <begin position="283"/>
        <end position="296"/>
    </location>
</feature>
<feature type="compositionally biased region" description="Low complexity" evidence="2">
    <location>
        <begin position="308"/>
        <end position="332"/>
    </location>
</feature>
<gene>
    <name type="primary">FRT2</name>
    <name type="synonym">HPH2</name>
    <name type="ordered locus">YAL028W</name>
</gene>
<name>HPH2_YEAST</name>
<sequence length="528" mass="58750">MQNAQIKSSSKGSGIDGTDRNSKDGVEKRPLEDVKQMIDAGTPDVGHKSTVETKPNVGWQASHSNLAALHEKEQKYEMEHHHARHKLHRQVIPDYTSASTAMFSDCMFNAAPDKVRSLSTMKSSGLSPKHPFNVVATFKGPFPQHSVESKPLDGGYSAKDHFPSFKMLQAQQHPAHRHYKDNDKYGLKSPSRSFVKDKKRLVHRFLKSMEPSSSGQSKDSSALAPAFDPILPNVISKPSKRPTHHSHSSDGSSSTQTDISLQSLLYHDLESSPKKHVSPSRPPSVASESSPAVANPIGLSPKDACNASFSQSSSSSLSSSSSSSSSTSFSQSVAVDPLEPPGNITYSSSNLSLNSDELDYYQRHIGLQLQQTEALLKHSLKDEVLKDENDLVKNIANFDKIVKELRDLRSRTIGWKELVEEDYLMNLKQDFDKENPESFEARLSDTINTNVAKLQDLEKRMASCKDRLASRKEVMRKMESLLSLENSLMISKKNVTFASKYRNEALDIVFLIIIIVICYTFKHLVSHK</sequence>
<comment type="function">
    <text evidence="4">Required for growth under high NaCl, alkaline pH and cell wall stress.</text>
</comment>
<comment type="subunit">
    <text evidence="4">Interacts with HPH1/FRT1.</text>
</comment>
<comment type="subcellular location">
    <subcellularLocation>
        <location evidence="4">Endoplasmic reticulum membrane</location>
        <topology evidence="4">Single-pass membrane protein</topology>
    </subcellularLocation>
    <text>Punctate foci at the endoplasmic reticulum membrane.</text>
</comment>
<comment type="PTM">
    <text evidence="3">Phosphorylated by CDC28.</text>
</comment>
<accession>P39734</accession>
<accession>D6VPJ0</accession>
<accession>P39733</accession>
<organism>
    <name type="scientific">Saccharomyces cerevisiae (strain ATCC 204508 / S288c)</name>
    <name type="common">Baker's yeast</name>
    <dbReference type="NCBI Taxonomy" id="559292"/>
    <lineage>
        <taxon>Eukaryota</taxon>
        <taxon>Fungi</taxon>
        <taxon>Dikarya</taxon>
        <taxon>Ascomycota</taxon>
        <taxon>Saccharomycotina</taxon>
        <taxon>Saccharomycetes</taxon>
        <taxon>Saccharomycetales</taxon>
        <taxon>Saccharomycetaceae</taxon>
        <taxon>Saccharomyces</taxon>
    </lineage>
</organism>